<proteinExistence type="inferred from homology"/>
<dbReference type="EMBL" id="CP000425">
    <property type="protein sequence ID" value="ABJ73823.1"/>
    <property type="molecule type" value="Genomic_DNA"/>
</dbReference>
<dbReference type="RefSeq" id="WP_003130555.1">
    <property type="nucleotide sequence ID" value="NC_008527.1"/>
</dbReference>
<dbReference type="SMR" id="Q02W49"/>
<dbReference type="GeneID" id="89634422"/>
<dbReference type="KEGG" id="llc:LACR_2377"/>
<dbReference type="HOGENOM" id="CLU_103849_1_1_9"/>
<dbReference type="Proteomes" id="UP000000240">
    <property type="component" value="Chromosome"/>
</dbReference>
<dbReference type="GO" id="GO:0005829">
    <property type="term" value="C:cytosol"/>
    <property type="evidence" value="ECO:0007669"/>
    <property type="project" value="TreeGrafter"/>
</dbReference>
<dbReference type="GO" id="GO:0015935">
    <property type="term" value="C:small ribosomal subunit"/>
    <property type="evidence" value="ECO:0007669"/>
    <property type="project" value="TreeGrafter"/>
</dbReference>
<dbReference type="GO" id="GO:0019843">
    <property type="term" value="F:rRNA binding"/>
    <property type="evidence" value="ECO:0007669"/>
    <property type="project" value="UniProtKB-UniRule"/>
</dbReference>
<dbReference type="GO" id="GO:0003735">
    <property type="term" value="F:structural constituent of ribosome"/>
    <property type="evidence" value="ECO:0007669"/>
    <property type="project" value="InterPro"/>
</dbReference>
<dbReference type="GO" id="GO:0000049">
    <property type="term" value="F:tRNA binding"/>
    <property type="evidence" value="ECO:0007669"/>
    <property type="project" value="UniProtKB-UniRule"/>
</dbReference>
<dbReference type="GO" id="GO:0006412">
    <property type="term" value="P:translation"/>
    <property type="evidence" value="ECO:0007669"/>
    <property type="project" value="UniProtKB-UniRule"/>
</dbReference>
<dbReference type="FunFam" id="1.10.8.50:FF:000001">
    <property type="entry name" value="30S ribosomal protein S13"/>
    <property type="match status" value="1"/>
</dbReference>
<dbReference type="FunFam" id="4.10.910.10:FF:000001">
    <property type="entry name" value="30S ribosomal protein S13"/>
    <property type="match status" value="1"/>
</dbReference>
<dbReference type="Gene3D" id="1.10.8.50">
    <property type="match status" value="1"/>
</dbReference>
<dbReference type="Gene3D" id="4.10.910.10">
    <property type="entry name" value="30s ribosomal protein s13, domain 2"/>
    <property type="match status" value="1"/>
</dbReference>
<dbReference type="HAMAP" id="MF_01315">
    <property type="entry name" value="Ribosomal_uS13"/>
    <property type="match status" value="1"/>
</dbReference>
<dbReference type="InterPro" id="IPR027437">
    <property type="entry name" value="Rbsml_uS13_C"/>
</dbReference>
<dbReference type="InterPro" id="IPR001892">
    <property type="entry name" value="Ribosomal_uS13"/>
</dbReference>
<dbReference type="InterPro" id="IPR010979">
    <property type="entry name" value="Ribosomal_uS13-like_H2TH"/>
</dbReference>
<dbReference type="InterPro" id="IPR019980">
    <property type="entry name" value="Ribosomal_uS13_bac-type"/>
</dbReference>
<dbReference type="InterPro" id="IPR018269">
    <property type="entry name" value="Ribosomal_uS13_CS"/>
</dbReference>
<dbReference type="NCBIfam" id="TIGR03631">
    <property type="entry name" value="uS13_bact"/>
    <property type="match status" value="1"/>
</dbReference>
<dbReference type="PANTHER" id="PTHR10871">
    <property type="entry name" value="30S RIBOSOMAL PROTEIN S13/40S RIBOSOMAL PROTEIN S18"/>
    <property type="match status" value="1"/>
</dbReference>
<dbReference type="PANTHER" id="PTHR10871:SF1">
    <property type="entry name" value="SMALL RIBOSOMAL SUBUNIT PROTEIN US13M"/>
    <property type="match status" value="1"/>
</dbReference>
<dbReference type="Pfam" id="PF00416">
    <property type="entry name" value="Ribosomal_S13"/>
    <property type="match status" value="1"/>
</dbReference>
<dbReference type="PIRSF" id="PIRSF002134">
    <property type="entry name" value="Ribosomal_S13"/>
    <property type="match status" value="1"/>
</dbReference>
<dbReference type="SUPFAM" id="SSF46946">
    <property type="entry name" value="S13-like H2TH domain"/>
    <property type="match status" value="1"/>
</dbReference>
<dbReference type="PROSITE" id="PS00646">
    <property type="entry name" value="RIBOSOMAL_S13_1"/>
    <property type="match status" value="1"/>
</dbReference>
<dbReference type="PROSITE" id="PS50159">
    <property type="entry name" value="RIBOSOMAL_S13_2"/>
    <property type="match status" value="1"/>
</dbReference>
<organism>
    <name type="scientific">Lactococcus lactis subsp. cremoris (strain SK11)</name>
    <dbReference type="NCBI Taxonomy" id="272622"/>
    <lineage>
        <taxon>Bacteria</taxon>
        <taxon>Bacillati</taxon>
        <taxon>Bacillota</taxon>
        <taxon>Bacilli</taxon>
        <taxon>Lactobacillales</taxon>
        <taxon>Streptococcaceae</taxon>
        <taxon>Lactococcus</taxon>
        <taxon>Lactococcus cremoris subsp. cremoris</taxon>
    </lineage>
</organism>
<gene>
    <name evidence="1" type="primary">rpsM</name>
    <name type="ordered locus">LACR_2377</name>
</gene>
<keyword id="KW-0687">Ribonucleoprotein</keyword>
<keyword id="KW-0689">Ribosomal protein</keyword>
<keyword id="KW-0694">RNA-binding</keyword>
<keyword id="KW-0699">rRNA-binding</keyword>
<keyword id="KW-0820">tRNA-binding</keyword>
<name>RS13_LACLS</name>
<feature type="chain" id="PRO_0000306632" description="Small ribosomal subunit protein uS13">
    <location>
        <begin position="1"/>
        <end position="121"/>
    </location>
</feature>
<feature type="region of interest" description="Disordered" evidence="2">
    <location>
        <begin position="88"/>
        <end position="121"/>
    </location>
</feature>
<feature type="compositionally biased region" description="Basic residues" evidence="2">
    <location>
        <begin position="106"/>
        <end position="121"/>
    </location>
</feature>
<evidence type="ECO:0000255" key="1">
    <source>
        <dbReference type="HAMAP-Rule" id="MF_01315"/>
    </source>
</evidence>
<evidence type="ECO:0000256" key="2">
    <source>
        <dbReference type="SAM" id="MobiDB-lite"/>
    </source>
</evidence>
<evidence type="ECO:0000305" key="3"/>
<sequence>MARFAGVDIPNEKRIVISLTYVFGVGLQTSKKVLAAAGVSEDIRTKDLTSDQEDAIRRELDGLKLEGDLRREVSLNIKRLMEIGSYRGMRHRRGLPTRGQNTKNNARTRKGPAKSIAGKKK</sequence>
<accession>Q02W49</accession>
<reference key="1">
    <citation type="journal article" date="2006" name="Proc. Natl. Acad. Sci. U.S.A.">
        <title>Comparative genomics of the lactic acid bacteria.</title>
        <authorList>
            <person name="Makarova K.S."/>
            <person name="Slesarev A."/>
            <person name="Wolf Y.I."/>
            <person name="Sorokin A."/>
            <person name="Mirkin B."/>
            <person name="Koonin E.V."/>
            <person name="Pavlov A."/>
            <person name="Pavlova N."/>
            <person name="Karamychev V."/>
            <person name="Polouchine N."/>
            <person name="Shakhova V."/>
            <person name="Grigoriev I."/>
            <person name="Lou Y."/>
            <person name="Rohksar D."/>
            <person name="Lucas S."/>
            <person name="Huang K."/>
            <person name="Goodstein D.M."/>
            <person name="Hawkins T."/>
            <person name="Plengvidhya V."/>
            <person name="Welker D."/>
            <person name="Hughes J."/>
            <person name="Goh Y."/>
            <person name="Benson A."/>
            <person name="Baldwin K."/>
            <person name="Lee J.-H."/>
            <person name="Diaz-Muniz I."/>
            <person name="Dosti B."/>
            <person name="Smeianov V."/>
            <person name="Wechter W."/>
            <person name="Barabote R."/>
            <person name="Lorca G."/>
            <person name="Altermann E."/>
            <person name="Barrangou R."/>
            <person name="Ganesan B."/>
            <person name="Xie Y."/>
            <person name="Rawsthorne H."/>
            <person name="Tamir D."/>
            <person name="Parker C."/>
            <person name="Breidt F."/>
            <person name="Broadbent J.R."/>
            <person name="Hutkins R."/>
            <person name="O'Sullivan D."/>
            <person name="Steele J."/>
            <person name="Unlu G."/>
            <person name="Saier M.H. Jr."/>
            <person name="Klaenhammer T."/>
            <person name="Richardson P."/>
            <person name="Kozyavkin S."/>
            <person name="Weimer B.C."/>
            <person name="Mills D.A."/>
        </authorList>
    </citation>
    <scope>NUCLEOTIDE SEQUENCE [LARGE SCALE GENOMIC DNA]</scope>
    <source>
        <strain>SK11</strain>
    </source>
</reference>
<comment type="function">
    <text evidence="1">Located at the top of the head of the 30S subunit, it contacts several helices of the 16S rRNA. In the 70S ribosome it contacts the 23S rRNA (bridge B1a) and protein L5 of the 50S subunit (bridge B1b), connecting the 2 subunits; these bridges are implicated in subunit movement. Contacts the tRNAs in the A and P-sites.</text>
</comment>
<comment type="subunit">
    <text evidence="1">Part of the 30S ribosomal subunit. Forms a loose heterodimer with protein S19. Forms two bridges to the 50S subunit in the 70S ribosome.</text>
</comment>
<comment type="similarity">
    <text evidence="1">Belongs to the universal ribosomal protein uS13 family.</text>
</comment>
<protein>
    <recommendedName>
        <fullName evidence="1">Small ribosomal subunit protein uS13</fullName>
    </recommendedName>
    <alternativeName>
        <fullName evidence="3">30S ribosomal protein S13</fullName>
    </alternativeName>
</protein>